<feature type="chain" id="PRO_0000234311" description="L-threonine dehydratase biosynthetic IlvA">
    <location>
        <begin position="1"/>
        <end position="422"/>
    </location>
</feature>
<feature type="domain" description="ACT-like" evidence="2">
    <location>
        <begin position="339"/>
        <end position="413"/>
    </location>
</feature>
<feature type="binding site" evidence="1">
    <location>
        <position position="83"/>
    </location>
    <ligand>
        <name>pyridoxal 5'-phosphate</name>
        <dbReference type="ChEBI" id="CHEBI:597326"/>
    </ligand>
</feature>
<feature type="binding site" evidence="1">
    <location>
        <begin position="189"/>
        <end position="193"/>
    </location>
    <ligand>
        <name>pyridoxal 5'-phosphate</name>
        <dbReference type="ChEBI" id="CHEBI:597326"/>
    </ligand>
</feature>
<feature type="binding site" evidence="1">
    <location>
        <position position="315"/>
    </location>
    <ligand>
        <name>pyridoxal 5'-phosphate</name>
        <dbReference type="ChEBI" id="CHEBI:597326"/>
    </ligand>
</feature>
<feature type="modified residue" description="N6-(pyridoxal phosphate)lysine" evidence="1">
    <location>
        <position position="56"/>
    </location>
</feature>
<organism>
    <name type="scientific">Staphylococcus aureus (strain MW2)</name>
    <dbReference type="NCBI Taxonomy" id="196620"/>
    <lineage>
        <taxon>Bacteria</taxon>
        <taxon>Bacillati</taxon>
        <taxon>Bacillota</taxon>
        <taxon>Bacilli</taxon>
        <taxon>Bacillales</taxon>
        <taxon>Staphylococcaceae</taxon>
        <taxon>Staphylococcus</taxon>
    </lineage>
</organism>
<reference key="1">
    <citation type="journal article" date="2002" name="Lancet">
        <title>Genome and virulence determinants of high virulence community-acquired MRSA.</title>
        <authorList>
            <person name="Baba T."/>
            <person name="Takeuchi F."/>
            <person name="Kuroda M."/>
            <person name="Yuzawa H."/>
            <person name="Aoki K."/>
            <person name="Oguchi A."/>
            <person name="Nagai Y."/>
            <person name="Iwama N."/>
            <person name="Asano K."/>
            <person name="Naimi T."/>
            <person name="Kuroda H."/>
            <person name="Cui L."/>
            <person name="Yamamoto K."/>
            <person name="Hiramatsu K."/>
        </authorList>
    </citation>
    <scope>NUCLEOTIDE SEQUENCE [LARGE SCALE GENOMIC DNA]</scope>
    <source>
        <strain>MW2</strain>
    </source>
</reference>
<dbReference type="EC" id="4.3.1.19"/>
<dbReference type="EMBL" id="BA000033">
    <property type="protein sequence ID" value="BAB95850.1"/>
    <property type="molecule type" value="Genomic_DNA"/>
</dbReference>
<dbReference type="RefSeq" id="WP_000216855.1">
    <property type="nucleotide sequence ID" value="NC_003923.1"/>
</dbReference>
<dbReference type="SMR" id="Q8NVI8"/>
<dbReference type="KEGG" id="sam:MW1985"/>
<dbReference type="HOGENOM" id="CLU_021152_4_2_9"/>
<dbReference type="UniPathway" id="UPA00047">
    <property type="reaction ID" value="UER00054"/>
</dbReference>
<dbReference type="GO" id="GO:0003941">
    <property type="term" value="F:L-serine ammonia-lyase activity"/>
    <property type="evidence" value="ECO:0007669"/>
    <property type="project" value="TreeGrafter"/>
</dbReference>
<dbReference type="GO" id="GO:0030170">
    <property type="term" value="F:pyridoxal phosphate binding"/>
    <property type="evidence" value="ECO:0007669"/>
    <property type="project" value="InterPro"/>
</dbReference>
<dbReference type="GO" id="GO:0004794">
    <property type="term" value="F:threonine deaminase activity"/>
    <property type="evidence" value="ECO:0007669"/>
    <property type="project" value="UniProtKB-EC"/>
</dbReference>
<dbReference type="GO" id="GO:0009097">
    <property type="term" value="P:isoleucine biosynthetic process"/>
    <property type="evidence" value="ECO:0007669"/>
    <property type="project" value="UniProtKB-UniPathway"/>
</dbReference>
<dbReference type="GO" id="GO:0006565">
    <property type="term" value="P:L-serine catabolic process"/>
    <property type="evidence" value="ECO:0007669"/>
    <property type="project" value="TreeGrafter"/>
</dbReference>
<dbReference type="GO" id="GO:0006567">
    <property type="term" value="P:threonine catabolic process"/>
    <property type="evidence" value="ECO:0007669"/>
    <property type="project" value="TreeGrafter"/>
</dbReference>
<dbReference type="GO" id="GO:0006566">
    <property type="term" value="P:threonine metabolic process"/>
    <property type="evidence" value="ECO:0000250"/>
    <property type="project" value="UniProtKB"/>
</dbReference>
<dbReference type="CDD" id="cd04907">
    <property type="entry name" value="ACT_ThrD-I_2"/>
    <property type="match status" value="1"/>
</dbReference>
<dbReference type="CDD" id="cd01562">
    <property type="entry name" value="Thr-dehyd"/>
    <property type="match status" value="1"/>
</dbReference>
<dbReference type="FunFam" id="3.40.1020.10:FF:000002">
    <property type="entry name" value="L-threonine dehydratase"/>
    <property type="match status" value="1"/>
</dbReference>
<dbReference type="FunFam" id="3.40.50.1100:FF:000005">
    <property type="entry name" value="Threonine dehydratase catabolic"/>
    <property type="match status" value="1"/>
</dbReference>
<dbReference type="Gene3D" id="3.40.50.1100">
    <property type="match status" value="2"/>
</dbReference>
<dbReference type="Gene3D" id="3.40.1020.10">
    <property type="entry name" value="Biosynthetic Threonine Deaminase, Domain 3"/>
    <property type="match status" value="1"/>
</dbReference>
<dbReference type="InterPro" id="IPR045865">
    <property type="entry name" value="ACT-like_dom_sf"/>
</dbReference>
<dbReference type="InterPro" id="IPR011820">
    <property type="entry name" value="IlvA"/>
</dbReference>
<dbReference type="InterPro" id="IPR050147">
    <property type="entry name" value="Ser/Thr_Dehydratase"/>
</dbReference>
<dbReference type="InterPro" id="IPR000634">
    <property type="entry name" value="Ser/Thr_deHydtase_PyrdxlP-BS"/>
</dbReference>
<dbReference type="InterPro" id="IPR001721">
    <property type="entry name" value="TD_ACT-like"/>
</dbReference>
<dbReference type="InterPro" id="IPR038110">
    <property type="entry name" value="TD_ACT-like_sf"/>
</dbReference>
<dbReference type="InterPro" id="IPR001926">
    <property type="entry name" value="TrpB-like_PALP"/>
</dbReference>
<dbReference type="InterPro" id="IPR036052">
    <property type="entry name" value="TrpB-like_PALP_sf"/>
</dbReference>
<dbReference type="NCBIfam" id="NF006390">
    <property type="entry name" value="PRK08639.1"/>
    <property type="match status" value="1"/>
</dbReference>
<dbReference type="NCBIfam" id="TIGR02079">
    <property type="entry name" value="THD1"/>
    <property type="match status" value="1"/>
</dbReference>
<dbReference type="PANTHER" id="PTHR48078:SF11">
    <property type="entry name" value="THREONINE DEHYDRATASE, MITOCHONDRIAL"/>
    <property type="match status" value="1"/>
</dbReference>
<dbReference type="PANTHER" id="PTHR48078">
    <property type="entry name" value="THREONINE DEHYDRATASE, MITOCHONDRIAL-RELATED"/>
    <property type="match status" value="1"/>
</dbReference>
<dbReference type="Pfam" id="PF00291">
    <property type="entry name" value="PALP"/>
    <property type="match status" value="1"/>
</dbReference>
<dbReference type="Pfam" id="PF00585">
    <property type="entry name" value="Thr_dehydrat_C"/>
    <property type="match status" value="1"/>
</dbReference>
<dbReference type="SUPFAM" id="SSF55021">
    <property type="entry name" value="ACT-like"/>
    <property type="match status" value="1"/>
</dbReference>
<dbReference type="SUPFAM" id="SSF53686">
    <property type="entry name" value="Tryptophan synthase beta subunit-like PLP-dependent enzymes"/>
    <property type="match status" value="1"/>
</dbReference>
<dbReference type="PROSITE" id="PS51672">
    <property type="entry name" value="ACT_LIKE"/>
    <property type="match status" value="1"/>
</dbReference>
<dbReference type="PROSITE" id="PS00165">
    <property type="entry name" value="DEHYDRATASE_SER_THR"/>
    <property type="match status" value="1"/>
</dbReference>
<evidence type="ECO:0000250" key="1"/>
<evidence type="ECO:0000255" key="2">
    <source>
        <dbReference type="PROSITE-ProRule" id="PRU01008"/>
    </source>
</evidence>
<evidence type="ECO:0000305" key="3"/>
<proteinExistence type="inferred from homology"/>
<accession>Q8NVI8</accession>
<sequence>MTVKTTVSTKDIDEAFLRLKDIVKETPLQLDHYLSQKYDCKVYLKREDLQWVRSFKLRGAYNAISVLSDEAKSKGITCASAGNHAQGVAYTAKKLNLNAVIFMPVTTPLQKVNQVKFFGNSNVEVVLTGDTFDHCLAEALTYTSEHQMNFIDPFNNVHTISGQGTLAKEMLEQSKTDNVNFDYLFAAIGGGGLISGISTYFKTYSPTTKIIGVEPSGASSMYESVVVNNQVVTLPNIDKFVDGASVARVGDITFEIAKENVDDYVQVDEGAVCSTILDMYSKQAIVAEPAGALSVSALENYKDHIKGKTVVCVISGGNNDINRMKEIEERSLLYEEMKHYFILNFPQRPGALREFVNDVLGPQDDITKFEYLKKSSQNTGTVIIGIQLKDHDDLIQLKQRVNHFDPSNIYINENKMLYSLLI</sequence>
<comment type="function">
    <text evidence="1">Catalyzes the anaerobic formation of alpha-ketobutyrate and ammonia from threonine in a two-step reaction. The first step involved a dehydration of threonine and a production of enamine intermediates (aminocrotonate), which tautomerizes to its imine form (iminobutyrate). Both intermediates are unstable and short-lived. The second step is the nonenzymatic hydrolysis of the enamine/imine intermediates to form 2-ketobutyrate and free ammonia. In the low water environment of the cell, the second step is accelerated by RidA (By similarity).</text>
</comment>
<comment type="catalytic activity">
    <reaction>
        <text>L-threonine = 2-oxobutanoate + NH4(+)</text>
        <dbReference type="Rhea" id="RHEA:22108"/>
        <dbReference type="ChEBI" id="CHEBI:16763"/>
        <dbReference type="ChEBI" id="CHEBI:28938"/>
        <dbReference type="ChEBI" id="CHEBI:57926"/>
        <dbReference type="EC" id="4.3.1.19"/>
    </reaction>
</comment>
<comment type="cofactor">
    <cofactor evidence="1">
        <name>pyridoxal 5'-phosphate</name>
        <dbReference type="ChEBI" id="CHEBI:597326"/>
    </cofactor>
</comment>
<comment type="pathway">
    <text>Amino-acid biosynthesis; L-isoleucine biosynthesis; 2-oxobutanoate from L-threonine: step 1/1.</text>
</comment>
<comment type="subunit">
    <text evidence="1">Homotetramer.</text>
</comment>
<comment type="similarity">
    <text evidence="3">Belongs to the serine/threonine dehydratase family.</text>
</comment>
<protein>
    <recommendedName>
        <fullName>L-threonine dehydratase biosynthetic IlvA</fullName>
        <ecNumber>4.3.1.19</ecNumber>
    </recommendedName>
    <alternativeName>
        <fullName>Threonine deaminase</fullName>
    </alternativeName>
</protein>
<keyword id="KW-0028">Amino-acid biosynthesis</keyword>
<keyword id="KW-0100">Branched-chain amino acid biosynthesis</keyword>
<keyword id="KW-0412">Isoleucine biosynthesis</keyword>
<keyword id="KW-0456">Lyase</keyword>
<keyword id="KW-0663">Pyridoxal phosphate</keyword>
<gene>
    <name type="primary">ilvA</name>
    <name type="ordered locus">MW1985</name>
</gene>
<name>ILVA_STAAW</name>